<protein>
    <recommendedName>
        <fullName evidence="1">Diaminopimelate epimerase</fullName>
        <shortName evidence="1">DAP epimerase</shortName>
        <ecNumber evidence="1">5.1.1.7</ecNumber>
    </recommendedName>
    <alternativeName>
        <fullName evidence="1">PLP-independent amino acid racemase</fullName>
    </alternativeName>
</protein>
<dbReference type="EC" id="5.1.1.7" evidence="1"/>
<dbReference type="EMBL" id="CP000241">
    <property type="protein sequence ID" value="ABF84612.1"/>
    <property type="molecule type" value="Genomic_DNA"/>
</dbReference>
<dbReference type="RefSeq" id="WP_000232448.1">
    <property type="nucleotide sequence ID" value="NC_008086.1"/>
</dbReference>
<dbReference type="SMR" id="Q1CTW0"/>
<dbReference type="KEGG" id="hpa:HPAG1_0545"/>
<dbReference type="HOGENOM" id="CLU_053306_3_2_7"/>
<dbReference type="UniPathway" id="UPA00034">
    <property type="reaction ID" value="UER00025"/>
</dbReference>
<dbReference type="GO" id="GO:0005829">
    <property type="term" value="C:cytosol"/>
    <property type="evidence" value="ECO:0007669"/>
    <property type="project" value="TreeGrafter"/>
</dbReference>
<dbReference type="GO" id="GO:0008837">
    <property type="term" value="F:diaminopimelate epimerase activity"/>
    <property type="evidence" value="ECO:0007669"/>
    <property type="project" value="UniProtKB-UniRule"/>
</dbReference>
<dbReference type="GO" id="GO:0009089">
    <property type="term" value="P:lysine biosynthetic process via diaminopimelate"/>
    <property type="evidence" value="ECO:0007669"/>
    <property type="project" value="UniProtKB-UniRule"/>
</dbReference>
<dbReference type="FunFam" id="3.10.310.10:FF:000025">
    <property type="entry name" value="Diaminopimelate epimerase"/>
    <property type="match status" value="1"/>
</dbReference>
<dbReference type="Gene3D" id="3.10.310.10">
    <property type="entry name" value="Diaminopimelate Epimerase, Chain A, domain 1"/>
    <property type="match status" value="2"/>
</dbReference>
<dbReference type="HAMAP" id="MF_00197">
    <property type="entry name" value="DAP_epimerase"/>
    <property type="match status" value="1"/>
</dbReference>
<dbReference type="InterPro" id="IPR018510">
    <property type="entry name" value="DAP_epimerase_AS"/>
</dbReference>
<dbReference type="InterPro" id="IPR001653">
    <property type="entry name" value="DAP_epimerase_DapF"/>
</dbReference>
<dbReference type="NCBIfam" id="TIGR00652">
    <property type="entry name" value="DapF"/>
    <property type="match status" value="1"/>
</dbReference>
<dbReference type="PANTHER" id="PTHR31689:SF0">
    <property type="entry name" value="DIAMINOPIMELATE EPIMERASE"/>
    <property type="match status" value="1"/>
</dbReference>
<dbReference type="PANTHER" id="PTHR31689">
    <property type="entry name" value="DIAMINOPIMELATE EPIMERASE, CHLOROPLASTIC"/>
    <property type="match status" value="1"/>
</dbReference>
<dbReference type="Pfam" id="PF01678">
    <property type="entry name" value="DAP_epimerase"/>
    <property type="match status" value="2"/>
</dbReference>
<dbReference type="SUPFAM" id="SSF54506">
    <property type="entry name" value="Diaminopimelate epimerase-like"/>
    <property type="match status" value="2"/>
</dbReference>
<dbReference type="PROSITE" id="PS01326">
    <property type="entry name" value="DAP_EPIMERASE"/>
    <property type="match status" value="1"/>
</dbReference>
<reference key="1">
    <citation type="journal article" date="2006" name="Proc. Natl. Acad. Sci. U.S.A.">
        <title>The complete genome sequence of a chronic atrophic gastritis Helicobacter pylori strain: evolution during disease progression.</title>
        <authorList>
            <person name="Oh J.D."/>
            <person name="Kling-Baeckhed H."/>
            <person name="Giannakis M."/>
            <person name="Xu J."/>
            <person name="Fulton R.S."/>
            <person name="Fulton L.A."/>
            <person name="Cordum H.S."/>
            <person name="Wang C."/>
            <person name="Elliott G."/>
            <person name="Edwards J."/>
            <person name="Mardis E.R."/>
            <person name="Engstrand L.G."/>
            <person name="Gordon J.I."/>
        </authorList>
    </citation>
    <scope>NUCLEOTIDE SEQUENCE [LARGE SCALE GENOMIC DNA]</scope>
    <source>
        <strain>HPAG1</strain>
    </source>
</reference>
<sequence length="273" mass="30653">MVFYKYSGSGNDFLIVQSFKKKDFSNLAKQVCHRHEGFGADGLVVVLPSKDYDYEWDFYNSDGSKAGMCGNASRCVGLFAYQHAIAPKEHVFLAGKREISIRIEEPNIIESNLGNYKILDVIPALRCEKFFTNDSVLENIPTFYLIDTGVPHLVGFVKNKEGLNSLNTLELRALRHEFNANINIAFIENKETIFLQTYERGVEDFTLACGTGMAAVFIAARIFYNTPKKAALIPKSNESLELSLKNDGIFYKGAVRYIGMSVLGMRVFENGCF</sequence>
<name>DAPF_HELPH</name>
<proteinExistence type="inferred from homology"/>
<organism>
    <name type="scientific">Helicobacter pylori (strain HPAG1)</name>
    <dbReference type="NCBI Taxonomy" id="357544"/>
    <lineage>
        <taxon>Bacteria</taxon>
        <taxon>Pseudomonadati</taxon>
        <taxon>Campylobacterota</taxon>
        <taxon>Epsilonproteobacteria</taxon>
        <taxon>Campylobacterales</taxon>
        <taxon>Helicobacteraceae</taxon>
        <taxon>Helicobacter</taxon>
    </lineage>
</organism>
<comment type="function">
    <text evidence="1">Catalyzes the stereoinversion of LL-2,6-diaminopimelate (L,L-DAP) to meso-diaminopimelate (meso-DAP), a precursor of L-lysine and an essential component of the bacterial peptidoglycan.</text>
</comment>
<comment type="catalytic activity">
    <reaction evidence="1">
        <text>(2S,6S)-2,6-diaminopimelate = meso-2,6-diaminopimelate</text>
        <dbReference type="Rhea" id="RHEA:15393"/>
        <dbReference type="ChEBI" id="CHEBI:57609"/>
        <dbReference type="ChEBI" id="CHEBI:57791"/>
        <dbReference type="EC" id="5.1.1.7"/>
    </reaction>
</comment>
<comment type="pathway">
    <text evidence="1">Amino-acid biosynthesis; L-lysine biosynthesis via DAP pathway; DL-2,6-diaminopimelate from LL-2,6-diaminopimelate: step 1/1.</text>
</comment>
<comment type="subunit">
    <text evidence="1">Homodimer.</text>
</comment>
<comment type="subcellular location">
    <subcellularLocation>
        <location evidence="1">Cytoplasm</location>
    </subcellularLocation>
</comment>
<comment type="similarity">
    <text evidence="1">Belongs to the diaminopimelate epimerase family.</text>
</comment>
<accession>Q1CTW0</accession>
<gene>
    <name evidence="1" type="primary">dapF</name>
    <name type="ordered locus">HPAG1_0545</name>
</gene>
<evidence type="ECO:0000255" key="1">
    <source>
        <dbReference type="HAMAP-Rule" id="MF_00197"/>
    </source>
</evidence>
<feature type="chain" id="PRO_1000011890" description="Diaminopimelate epimerase">
    <location>
        <begin position="1"/>
        <end position="273"/>
    </location>
</feature>
<feature type="active site" description="Proton donor" evidence="1">
    <location>
        <position position="69"/>
    </location>
</feature>
<feature type="active site" description="Proton acceptor" evidence="1">
    <location>
        <position position="209"/>
    </location>
</feature>
<feature type="binding site" evidence="1">
    <location>
        <position position="11"/>
    </location>
    <ligand>
        <name>substrate</name>
    </ligand>
</feature>
<feature type="binding site" evidence="1">
    <location>
        <position position="60"/>
    </location>
    <ligand>
        <name>substrate</name>
    </ligand>
</feature>
<feature type="binding site" evidence="1">
    <location>
        <begin position="70"/>
        <end position="71"/>
    </location>
    <ligand>
        <name>substrate</name>
    </ligand>
</feature>
<feature type="binding site" evidence="1">
    <location>
        <position position="181"/>
    </location>
    <ligand>
        <name>substrate</name>
    </ligand>
</feature>
<feature type="binding site" evidence="1">
    <location>
        <begin position="199"/>
        <end position="200"/>
    </location>
    <ligand>
        <name>substrate</name>
    </ligand>
</feature>
<feature type="binding site" evidence="1">
    <location>
        <begin position="210"/>
        <end position="211"/>
    </location>
    <ligand>
        <name>substrate</name>
    </ligand>
</feature>
<feature type="site" description="Could be important to modulate the pK values of the two catalytic cysteine residues" evidence="1">
    <location>
        <position position="152"/>
    </location>
</feature>
<feature type="site" description="Could be important to modulate the pK values of the two catalytic cysteine residues" evidence="1">
    <location>
        <position position="199"/>
    </location>
</feature>
<keyword id="KW-0028">Amino-acid biosynthesis</keyword>
<keyword id="KW-0963">Cytoplasm</keyword>
<keyword id="KW-0413">Isomerase</keyword>
<keyword id="KW-0457">Lysine biosynthesis</keyword>